<organism>
    <name type="scientific">Thermotoga maritima (strain ATCC 43589 / DSM 3109 / JCM 10099 / NBRC 100826 / MSB8)</name>
    <dbReference type="NCBI Taxonomy" id="243274"/>
    <lineage>
        <taxon>Bacteria</taxon>
        <taxon>Thermotogati</taxon>
        <taxon>Thermotogota</taxon>
        <taxon>Thermotogae</taxon>
        <taxon>Thermotogales</taxon>
        <taxon>Thermotogaceae</taxon>
        <taxon>Thermotoga</taxon>
    </lineage>
</organism>
<accession>Q9X286</accession>
<proteinExistence type="evidence at protein level"/>
<dbReference type="EMBL" id="AE000512">
    <property type="protein sequence ID" value="AAD36829.1"/>
    <property type="molecule type" value="Genomic_DNA"/>
</dbReference>
<dbReference type="PIR" id="D72212">
    <property type="entry name" value="D72212"/>
</dbReference>
<dbReference type="RefSeq" id="NP_229562.1">
    <property type="nucleotide sequence ID" value="NC_000853.1"/>
</dbReference>
<dbReference type="RefSeq" id="WP_004082311.1">
    <property type="nucleotide sequence ID" value="NZ_CP011107.1"/>
</dbReference>
<dbReference type="PDB" id="1TZT">
    <property type="method" value="X-ray"/>
    <property type="resolution" value="1.55 A"/>
    <property type="chains" value="A/B=1-142"/>
</dbReference>
<dbReference type="PDB" id="1TZU">
    <property type="method" value="X-ray"/>
    <property type="resolution" value="1.85 A"/>
    <property type="chains" value="A=1-142"/>
</dbReference>
<dbReference type="PDB" id="1TZV">
    <property type="method" value="X-ray"/>
    <property type="resolution" value="1.35 A"/>
    <property type="chains" value="A=1-142"/>
</dbReference>
<dbReference type="PDB" id="1TZW">
    <property type="method" value="X-ray"/>
    <property type="resolution" value="1.60 A"/>
    <property type="chains" value="A=1-142"/>
</dbReference>
<dbReference type="PDB" id="1TZX">
    <property type="method" value="X-ray"/>
    <property type="resolution" value="1.72 A"/>
    <property type="chains" value="A/B=1-142"/>
</dbReference>
<dbReference type="PDBsum" id="1TZT"/>
<dbReference type="PDBsum" id="1TZU"/>
<dbReference type="PDBsum" id="1TZV"/>
<dbReference type="PDBsum" id="1TZW"/>
<dbReference type="PDBsum" id="1TZX"/>
<dbReference type="SMR" id="Q9X286"/>
<dbReference type="FunCoup" id="Q9X286">
    <property type="interactions" value="243"/>
</dbReference>
<dbReference type="STRING" id="243274.TM_1765"/>
<dbReference type="DrugBank" id="DB04272">
    <property type="generic name" value="Citric acid"/>
</dbReference>
<dbReference type="PaxDb" id="243274-THEMA_05400"/>
<dbReference type="EnsemblBacteria" id="AAD36829">
    <property type="protein sequence ID" value="AAD36829"/>
    <property type="gene ID" value="TM_1765"/>
</dbReference>
<dbReference type="KEGG" id="tma:TM1765"/>
<dbReference type="KEGG" id="tmi:THEMA_05400"/>
<dbReference type="KEGG" id="tmm:Tmari_1774"/>
<dbReference type="KEGG" id="tmw:THMA_1809"/>
<dbReference type="eggNOG" id="COG0781">
    <property type="taxonomic scope" value="Bacteria"/>
</dbReference>
<dbReference type="InParanoid" id="Q9X286"/>
<dbReference type="OrthoDB" id="9811381at2"/>
<dbReference type="EvolutionaryTrace" id="Q9X286"/>
<dbReference type="Proteomes" id="UP000008183">
    <property type="component" value="Chromosome"/>
</dbReference>
<dbReference type="GO" id="GO:0005829">
    <property type="term" value="C:cytosol"/>
    <property type="evidence" value="ECO:0000318"/>
    <property type="project" value="GO_Central"/>
</dbReference>
<dbReference type="GO" id="GO:0003723">
    <property type="term" value="F:RNA binding"/>
    <property type="evidence" value="ECO:0007669"/>
    <property type="project" value="UniProtKB-UniRule"/>
</dbReference>
<dbReference type="GO" id="GO:0006353">
    <property type="term" value="P:DNA-templated transcription termination"/>
    <property type="evidence" value="ECO:0007669"/>
    <property type="project" value="UniProtKB-UniRule"/>
</dbReference>
<dbReference type="GO" id="GO:0031564">
    <property type="term" value="P:transcription antitermination"/>
    <property type="evidence" value="ECO:0007669"/>
    <property type="project" value="UniProtKB-KW"/>
</dbReference>
<dbReference type="CDD" id="cd00619">
    <property type="entry name" value="Terminator_NusB"/>
    <property type="match status" value="1"/>
</dbReference>
<dbReference type="FunFam" id="1.10.940.10:FF:000018">
    <property type="entry name" value="Transcription antitermination protein NusB"/>
    <property type="match status" value="1"/>
</dbReference>
<dbReference type="Gene3D" id="1.10.940.10">
    <property type="entry name" value="NusB-like"/>
    <property type="match status" value="1"/>
</dbReference>
<dbReference type="HAMAP" id="MF_00073">
    <property type="entry name" value="NusB"/>
    <property type="match status" value="1"/>
</dbReference>
<dbReference type="InterPro" id="IPR035926">
    <property type="entry name" value="NusB-like_sf"/>
</dbReference>
<dbReference type="InterPro" id="IPR011605">
    <property type="entry name" value="NusB_fam"/>
</dbReference>
<dbReference type="InterPro" id="IPR006027">
    <property type="entry name" value="NusB_RsmB_TIM44"/>
</dbReference>
<dbReference type="NCBIfam" id="TIGR01951">
    <property type="entry name" value="nusB"/>
    <property type="match status" value="1"/>
</dbReference>
<dbReference type="PANTHER" id="PTHR11078:SF3">
    <property type="entry name" value="ANTITERMINATION NUSB DOMAIN-CONTAINING PROTEIN"/>
    <property type="match status" value="1"/>
</dbReference>
<dbReference type="PANTHER" id="PTHR11078">
    <property type="entry name" value="N UTILIZATION SUBSTANCE PROTEIN B-RELATED"/>
    <property type="match status" value="1"/>
</dbReference>
<dbReference type="Pfam" id="PF01029">
    <property type="entry name" value="NusB"/>
    <property type="match status" value="1"/>
</dbReference>
<dbReference type="SUPFAM" id="SSF48013">
    <property type="entry name" value="NusB-like"/>
    <property type="match status" value="1"/>
</dbReference>
<gene>
    <name evidence="1" type="primary">nusB</name>
    <name type="ordered locus">TM_1765</name>
</gene>
<evidence type="ECO:0000255" key="1">
    <source>
        <dbReference type="HAMAP-Rule" id="MF_00073"/>
    </source>
</evidence>
<evidence type="ECO:0000269" key="2">
    <source>
    </source>
</evidence>
<evidence type="ECO:0000303" key="3">
    <source>
    </source>
</evidence>
<evidence type="ECO:0000305" key="4"/>
<evidence type="ECO:0007744" key="5">
    <source>
        <dbReference type="PDB" id="1TZT"/>
    </source>
</evidence>
<evidence type="ECO:0007744" key="6">
    <source>
        <dbReference type="PDB" id="1TZU"/>
    </source>
</evidence>
<evidence type="ECO:0007744" key="7">
    <source>
        <dbReference type="PDB" id="1TZV"/>
    </source>
</evidence>
<evidence type="ECO:0007744" key="8">
    <source>
        <dbReference type="PDB" id="1TZW"/>
    </source>
</evidence>
<evidence type="ECO:0007744" key="9">
    <source>
        <dbReference type="PDB" id="1TZX"/>
    </source>
</evidence>
<evidence type="ECO:0007829" key="10">
    <source>
        <dbReference type="PDB" id="1TZV"/>
    </source>
</evidence>
<reference key="1">
    <citation type="journal article" date="1999" name="Nature">
        <title>Evidence for lateral gene transfer between Archaea and Bacteria from genome sequence of Thermotoga maritima.</title>
        <authorList>
            <person name="Nelson K.E."/>
            <person name="Clayton R.A."/>
            <person name="Gill S.R."/>
            <person name="Gwinn M.L."/>
            <person name="Dodson R.J."/>
            <person name="Haft D.H."/>
            <person name="Hickey E.K."/>
            <person name="Peterson J.D."/>
            <person name="Nelson W.C."/>
            <person name="Ketchum K.A."/>
            <person name="McDonald L.A."/>
            <person name="Utterback T.R."/>
            <person name="Malek J.A."/>
            <person name="Linher K.D."/>
            <person name="Garrett M.M."/>
            <person name="Stewart A.M."/>
            <person name="Cotton M.D."/>
            <person name="Pratt M.S."/>
            <person name="Phillips C.A."/>
            <person name="Richardson D.L."/>
            <person name="Heidelberg J.F."/>
            <person name="Sutton G.G."/>
            <person name="Fleischmann R.D."/>
            <person name="Eisen J.A."/>
            <person name="White O."/>
            <person name="Salzberg S.L."/>
            <person name="Smith H.O."/>
            <person name="Venter J.C."/>
            <person name="Fraser C.M."/>
        </authorList>
    </citation>
    <scope>NUCLEOTIDE SEQUENCE [LARGE SCALE GENOMIC DNA]</scope>
    <source>
        <strain>ATCC 43589 / DSM 3109 / JCM 10099 / NBRC 100826 / MSB8</strain>
    </source>
</reference>
<reference evidence="5 6 7 8 9" key="2">
    <citation type="journal article" date="2004" name="Biochem. J.">
        <title>Crystal structures of the antitermination factor NusB from Thermotoga maritima and implications for RNA binding.</title>
        <authorList>
            <person name="Bonin I."/>
            <person name="Robelek R."/>
            <person name="Benecke H."/>
            <person name="Urlaub H."/>
            <person name="Bacher A."/>
            <person name="Richter G."/>
            <person name="Wahl M.C."/>
        </authorList>
    </citation>
    <scope>X-RAY CRYSTALLOGRAPHY (1.35 ANGSTROMS)</scope>
    <scope>SUBUNIT</scope>
    <scope>RNA-BINDING</scope>
    <source>
        <strain>ATCC 43589 / DSM 3109 / JCM 10099 / NBRC 100826 / MSB8</strain>
    </source>
</reference>
<sequence>MKTPRRRMRLAVFKALFQHEFRRDEDLEQILEEILDETYDKKAKEDARRYIRGIKENLSMIDDLISRYLEKWSLNRLSVVDRNVLRLATYELLFEKDIPIEVTIDEAIEIAKRYGTENSGKFVNGILDRIAKEHAPKEKFEL</sequence>
<comment type="function">
    <text evidence="1">Involved in transcription antitermination. Required for transcription of ribosomal RNA (rRNA) genes. Binds specifically to the boxA antiterminator sequence of the ribosomal RNA (rrn) operons.</text>
</comment>
<comment type="subunit">
    <text evidence="2">Monomer or homodimer; in equilibrium, with a preference for the monomer. Dimerization may be employed to package NusB in an inactive form until recruitment into antitermination complexes.</text>
</comment>
<comment type="similarity">
    <text evidence="1 4">Belongs to the NusB family.</text>
</comment>
<protein>
    <recommendedName>
        <fullName evidence="1">Transcription antitermination protein NusB</fullName>
    </recommendedName>
    <alternativeName>
        <fullName evidence="1 3">Antitermination factor NusB</fullName>
    </alternativeName>
</protein>
<keyword id="KW-0002">3D-structure</keyword>
<keyword id="KW-1185">Reference proteome</keyword>
<keyword id="KW-0694">RNA-binding</keyword>
<keyword id="KW-0804">Transcription</keyword>
<keyword id="KW-0889">Transcription antitermination</keyword>
<keyword id="KW-0805">Transcription regulation</keyword>
<name>NUSB_THEMA</name>
<feature type="chain" id="PRO_0000176599" description="Transcription antitermination protein NusB">
    <location>
        <begin position="1"/>
        <end position="142"/>
    </location>
</feature>
<feature type="helix" evidence="10">
    <location>
        <begin position="5"/>
        <end position="19"/>
    </location>
</feature>
<feature type="helix" evidence="10">
    <location>
        <begin position="27"/>
        <end position="34"/>
    </location>
</feature>
<feature type="helix" evidence="10">
    <location>
        <begin position="41"/>
        <end position="56"/>
    </location>
</feature>
<feature type="helix" evidence="10">
    <location>
        <begin position="58"/>
        <end position="66"/>
    </location>
</feature>
<feature type="strand" evidence="10">
    <location>
        <begin position="70"/>
        <end position="72"/>
    </location>
</feature>
<feature type="helix" evidence="10">
    <location>
        <begin position="74"/>
        <end position="76"/>
    </location>
</feature>
<feature type="helix" evidence="10">
    <location>
        <begin position="79"/>
        <end position="94"/>
    </location>
</feature>
<feature type="helix" evidence="10">
    <location>
        <begin position="100"/>
        <end position="114"/>
    </location>
</feature>
<feature type="helix" evidence="10">
    <location>
        <begin position="117"/>
        <end position="134"/>
    </location>
</feature>
<feature type="helix" evidence="10">
    <location>
        <begin position="137"/>
        <end position="139"/>
    </location>
</feature>